<sequence length="506" mass="55544">MKQILFMDTTLRDGEQSPGVNLNEQEKLQIARQLEKLGIDVMEAGFAAASEGDFQSVKRIAESIQNASVMSLARAKESDIRKAYEAVKRAVSPRLHVFLATSDIHMKYKLCMSKEDVLDSIHRSVILGKSLFPTVQFSAEDATRTAQPFLAEAVEVAIRAGADVINIPDTVGYTHPEEYYSLFQYLQESVPSYEKAIFSCHCHDDLGMAVANSLAAIEGGALQVEGTINGIGERAGNAALEEVAVALHIRKDHYKTQSSIILKEIKATSTLVSRLTGMMIPKNKAIVGANAFAHESGIHQDGVLKEVTTYEIIAPELIGESQNLFVLGKHSGRHAFTERMKELGYELTQKERDAAFEAFKALADRKKEITDEDLRALMLGEAALLTQQYNIKQLQVHFVSNHIQCATVVLQDGKGNKYEDAATGAGSIEAIYHAIQRILEMECKLVDYRIQSITQGQDALAHVHVELKEGPHQVSGFGVAQDVLEASARAYVHAAGKLKALLTLVK</sequence>
<accession>A7GMU1</accession>
<organism>
    <name type="scientific">Bacillus cytotoxicus (strain DSM 22905 / CIP 110041 / 391-98 / NVH 391-98)</name>
    <dbReference type="NCBI Taxonomy" id="315749"/>
    <lineage>
        <taxon>Bacteria</taxon>
        <taxon>Bacillati</taxon>
        <taxon>Bacillota</taxon>
        <taxon>Bacilli</taxon>
        <taxon>Bacillales</taxon>
        <taxon>Bacillaceae</taxon>
        <taxon>Bacillus</taxon>
        <taxon>Bacillus cereus group</taxon>
    </lineage>
</organism>
<reference key="1">
    <citation type="journal article" date="2008" name="Chem. Biol. Interact.">
        <title>Extending the Bacillus cereus group genomics to putative food-borne pathogens of different toxicity.</title>
        <authorList>
            <person name="Lapidus A."/>
            <person name="Goltsman E."/>
            <person name="Auger S."/>
            <person name="Galleron N."/>
            <person name="Segurens B."/>
            <person name="Dossat C."/>
            <person name="Land M.L."/>
            <person name="Broussolle V."/>
            <person name="Brillard J."/>
            <person name="Guinebretiere M.-H."/>
            <person name="Sanchis V."/>
            <person name="Nguen-the C."/>
            <person name="Lereclus D."/>
            <person name="Richardson P."/>
            <person name="Wincker P."/>
            <person name="Weissenbach J."/>
            <person name="Ehrlich S.D."/>
            <person name="Sorokin A."/>
        </authorList>
    </citation>
    <scope>NUCLEOTIDE SEQUENCE [LARGE SCALE GENOMIC DNA]</scope>
    <source>
        <strain>DSM 22905 / CIP 110041 / 391-98 / NVH 391-98</strain>
    </source>
</reference>
<name>LEU1_BACCN</name>
<proteinExistence type="inferred from homology"/>
<evidence type="ECO:0000255" key="1">
    <source>
        <dbReference type="HAMAP-Rule" id="MF_01025"/>
    </source>
</evidence>
<gene>
    <name evidence="1" type="primary">leuA</name>
    <name type="ordered locus">Bcer98_1123</name>
</gene>
<protein>
    <recommendedName>
        <fullName evidence="1">2-isopropylmalate synthase</fullName>
        <ecNumber evidence="1">2.3.3.13</ecNumber>
    </recommendedName>
    <alternativeName>
        <fullName evidence="1">Alpha-IPM synthase</fullName>
    </alternativeName>
    <alternativeName>
        <fullName evidence="1">Alpha-isopropylmalate synthase</fullName>
    </alternativeName>
</protein>
<keyword id="KW-0028">Amino-acid biosynthesis</keyword>
<keyword id="KW-0100">Branched-chain amino acid biosynthesis</keyword>
<keyword id="KW-0963">Cytoplasm</keyword>
<keyword id="KW-0432">Leucine biosynthesis</keyword>
<keyword id="KW-0464">Manganese</keyword>
<keyword id="KW-0479">Metal-binding</keyword>
<keyword id="KW-0808">Transferase</keyword>
<dbReference type="EC" id="2.3.3.13" evidence="1"/>
<dbReference type="EMBL" id="CP000764">
    <property type="protein sequence ID" value="ABS21449.1"/>
    <property type="molecule type" value="Genomic_DNA"/>
</dbReference>
<dbReference type="RefSeq" id="WP_011984202.1">
    <property type="nucleotide sequence ID" value="NC_009674.1"/>
</dbReference>
<dbReference type="SMR" id="A7GMU1"/>
<dbReference type="STRING" id="315749.Bcer98_1123"/>
<dbReference type="GeneID" id="33896479"/>
<dbReference type="KEGG" id="bcy:Bcer98_1123"/>
<dbReference type="eggNOG" id="COG0119">
    <property type="taxonomic scope" value="Bacteria"/>
</dbReference>
<dbReference type="HOGENOM" id="CLU_022158_0_1_9"/>
<dbReference type="OrthoDB" id="9804858at2"/>
<dbReference type="UniPathway" id="UPA00048">
    <property type="reaction ID" value="UER00070"/>
</dbReference>
<dbReference type="Proteomes" id="UP000002300">
    <property type="component" value="Chromosome"/>
</dbReference>
<dbReference type="GO" id="GO:0005737">
    <property type="term" value="C:cytoplasm"/>
    <property type="evidence" value="ECO:0007669"/>
    <property type="project" value="UniProtKB-SubCell"/>
</dbReference>
<dbReference type="GO" id="GO:0003852">
    <property type="term" value="F:2-isopropylmalate synthase activity"/>
    <property type="evidence" value="ECO:0007669"/>
    <property type="project" value="UniProtKB-UniRule"/>
</dbReference>
<dbReference type="GO" id="GO:0003985">
    <property type="term" value="F:acetyl-CoA C-acetyltransferase activity"/>
    <property type="evidence" value="ECO:0007669"/>
    <property type="project" value="UniProtKB-UniRule"/>
</dbReference>
<dbReference type="GO" id="GO:0030145">
    <property type="term" value="F:manganese ion binding"/>
    <property type="evidence" value="ECO:0007669"/>
    <property type="project" value="UniProtKB-UniRule"/>
</dbReference>
<dbReference type="GO" id="GO:0009098">
    <property type="term" value="P:L-leucine biosynthetic process"/>
    <property type="evidence" value="ECO:0007669"/>
    <property type="project" value="UniProtKB-UniRule"/>
</dbReference>
<dbReference type="CDD" id="cd07940">
    <property type="entry name" value="DRE_TIM_IPMS"/>
    <property type="match status" value="1"/>
</dbReference>
<dbReference type="FunFam" id="1.10.238.260:FF:000001">
    <property type="entry name" value="2-isopropylmalate synthase"/>
    <property type="match status" value="1"/>
</dbReference>
<dbReference type="FunFam" id="3.20.20.70:FF:000010">
    <property type="entry name" value="2-isopropylmalate synthase"/>
    <property type="match status" value="1"/>
</dbReference>
<dbReference type="FunFam" id="3.30.160.270:FF:000003">
    <property type="entry name" value="2-isopropylmalate synthase"/>
    <property type="match status" value="1"/>
</dbReference>
<dbReference type="Gene3D" id="1.10.238.260">
    <property type="match status" value="1"/>
</dbReference>
<dbReference type="Gene3D" id="3.30.160.270">
    <property type="match status" value="1"/>
</dbReference>
<dbReference type="Gene3D" id="3.20.20.70">
    <property type="entry name" value="Aldolase class I"/>
    <property type="match status" value="1"/>
</dbReference>
<dbReference type="HAMAP" id="MF_01025">
    <property type="entry name" value="LeuA_type1"/>
    <property type="match status" value="1"/>
</dbReference>
<dbReference type="InterPro" id="IPR050073">
    <property type="entry name" value="2-IPM_HCS-like"/>
</dbReference>
<dbReference type="InterPro" id="IPR013709">
    <property type="entry name" value="2-isopropylmalate_synth_dimer"/>
</dbReference>
<dbReference type="InterPro" id="IPR002034">
    <property type="entry name" value="AIPM/Hcit_synth_CS"/>
</dbReference>
<dbReference type="InterPro" id="IPR013785">
    <property type="entry name" value="Aldolase_TIM"/>
</dbReference>
<dbReference type="InterPro" id="IPR054691">
    <property type="entry name" value="LeuA/HCS_post-cat"/>
</dbReference>
<dbReference type="InterPro" id="IPR036230">
    <property type="entry name" value="LeuA_allosteric_dom_sf"/>
</dbReference>
<dbReference type="InterPro" id="IPR005671">
    <property type="entry name" value="LeuA_bact_synth"/>
</dbReference>
<dbReference type="InterPro" id="IPR000891">
    <property type="entry name" value="PYR_CT"/>
</dbReference>
<dbReference type="NCBIfam" id="TIGR00973">
    <property type="entry name" value="leuA_bact"/>
    <property type="match status" value="1"/>
</dbReference>
<dbReference type="NCBIfam" id="NF002086">
    <property type="entry name" value="PRK00915.1-3"/>
    <property type="match status" value="1"/>
</dbReference>
<dbReference type="NCBIfam" id="NF002088">
    <property type="entry name" value="PRK00915.1-5"/>
    <property type="match status" value="1"/>
</dbReference>
<dbReference type="PANTHER" id="PTHR10277:SF9">
    <property type="entry name" value="2-ISOPROPYLMALATE SYNTHASE 1, CHLOROPLASTIC-RELATED"/>
    <property type="match status" value="1"/>
</dbReference>
<dbReference type="PANTHER" id="PTHR10277">
    <property type="entry name" value="HOMOCITRATE SYNTHASE-RELATED"/>
    <property type="match status" value="1"/>
</dbReference>
<dbReference type="Pfam" id="PF22617">
    <property type="entry name" value="HCS_D2"/>
    <property type="match status" value="1"/>
</dbReference>
<dbReference type="Pfam" id="PF00682">
    <property type="entry name" value="HMGL-like"/>
    <property type="match status" value="1"/>
</dbReference>
<dbReference type="Pfam" id="PF08502">
    <property type="entry name" value="LeuA_dimer"/>
    <property type="match status" value="1"/>
</dbReference>
<dbReference type="SMART" id="SM00917">
    <property type="entry name" value="LeuA_dimer"/>
    <property type="match status" value="1"/>
</dbReference>
<dbReference type="SUPFAM" id="SSF110921">
    <property type="entry name" value="2-isopropylmalate synthase LeuA, allosteric (dimerisation) domain"/>
    <property type="match status" value="1"/>
</dbReference>
<dbReference type="SUPFAM" id="SSF51569">
    <property type="entry name" value="Aldolase"/>
    <property type="match status" value="1"/>
</dbReference>
<dbReference type="PROSITE" id="PS00815">
    <property type="entry name" value="AIPM_HOMOCIT_SYNTH_1"/>
    <property type="match status" value="1"/>
</dbReference>
<dbReference type="PROSITE" id="PS00816">
    <property type="entry name" value="AIPM_HOMOCIT_SYNTH_2"/>
    <property type="match status" value="1"/>
</dbReference>
<dbReference type="PROSITE" id="PS50991">
    <property type="entry name" value="PYR_CT"/>
    <property type="match status" value="1"/>
</dbReference>
<comment type="function">
    <text evidence="1">Catalyzes the condensation of the acetyl group of acetyl-CoA with 3-methyl-2-oxobutanoate (2-ketoisovalerate) to form 3-carboxy-3-hydroxy-4-methylpentanoate (2-isopropylmalate).</text>
</comment>
<comment type="catalytic activity">
    <reaction evidence="1">
        <text>3-methyl-2-oxobutanoate + acetyl-CoA + H2O = (2S)-2-isopropylmalate + CoA + H(+)</text>
        <dbReference type="Rhea" id="RHEA:21524"/>
        <dbReference type="ChEBI" id="CHEBI:1178"/>
        <dbReference type="ChEBI" id="CHEBI:11851"/>
        <dbReference type="ChEBI" id="CHEBI:15377"/>
        <dbReference type="ChEBI" id="CHEBI:15378"/>
        <dbReference type="ChEBI" id="CHEBI:57287"/>
        <dbReference type="ChEBI" id="CHEBI:57288"/>
        <dbReference type="EC" id="2.3.3.13"/>
    </reaction>
</comment>
<comment type="cofactor">
    <cofactor evidence="1">
        <name>Mn(2+)</name>
        <dbReference type="ChEBI" id="CHEBI:29035"/>
    </cofactor>
</comment>
<comment type="pathway">
    <text evidence="1">Amino-acid biosynthesis; L-leucine biosynthesis; L-leucine from 3-methyl-2-oxobutanoate: step 1/4.</text>
</comment>
<comment type="subunit">
    <text evidence="1">Homodimer.</text>
</comment>
<comment type="subcellular location">
    <subcellularLocation>
        <location evidence="1">Cytoplasm</location>
    </subcellularLocation>
</comment>
<comment type="similarity">
    <text evidence="1">Belongs to the alpha-IPM synthase/homocitrate synthase family. LeuA type 1 subfamily.</text>
</comment>
<feature type="chain" id="PRO_1000149132" description="2-isopropylmalate synthase">
    <location>
        <begin position="1"/>
        <end position="506"/>
    </location>
</feature>
<feature type="domain" description="Pyruvate carboxyltransferase" evidence="1">
    <location>
        <begin position="4"/>
        <end position="266"/>
    </location>
</feature>
<feature type="region of interest" description="Regulatory domain" evidence="1">
    <location>
        <begin position="390"/>
        <end position="506"/>
    </location>
</feature>
<feature type="binding site" evidence="1">
    <location>
        <position position="13"/>
    </location>
    <ligand>
        <name>Mn(2+)</name>
        <dbReference type="ChEBI" id="CHEBI:29035"/>
    </ligand>
</feature>
<feature type="binding site" evidence="1">
    <location>
        <position position="201"/>
    </location>
    <ligand>
        <name>Mn(2+)</name>
        <dbReference type="ChEBI" id="CHEBI:29035"/>
    </ligand>
</feature>
<feature type="binding site" evidence="1">
    <location>
        <position position="203"/>
    </location>
    <ligand>
        <name>Mn(2+)</name>
        <dbReference type="ChEBI" id="CHEBI:29035"/>
    </ligand>
</feature>
<feature type="binding site" evidence="1">
    <location>
        <position position="237"/>
    </location>
    <ligand>
        <name>Mn(2+)</name>
        <dbReference type="ChEBI" id="CHEBI:29035"/>
    </ligand>
</feature>